<evidence type="ECO:0000256" key="1">
    <source>
        <dbReference type="SAM" id="MobiDB-lite"/>
    </source>
</evidence>
<evidence type="ECO:0000269" key="2">
    <source>
    </source>
</evidence>
<evidence type="ECO:0000269" key="3">
    <source>
    </source>
</evidence>
<evidence type="ECO:0000305" key="4"/>
<organism>
    <name type="scientific">Saccharomyces cerevisiae (strain ATCC 204508 / S288c)</name>
    <name type="common">Baker's yeast</name>
    <dbReference type="NCBI Taxonomy" id="559292"/>
    <lineage>
        <taxon>Eukaryota</taxon>
        <taxon>Fungi</taxon>
        <taxon>Dikarya</taxon>
        <taxon>Ascomycota</taxon>
        <taxon>Saccharomycotina</taxon>
        <taxon>Saccharomycetes</taxon>
        <taxon>Saccharomycetales</taxon>
        <taxon>Saccharomycetaceae</taxon>
        <taxon>Saccharomyces</taxon>
    </lineage>
</organism>
<name>NMD3_YEAST</name>
<gene>
    <name type="primary">NMD3</name>
    <name type="ordered locus">YHR170W</name>
</gene>
<proteinExistence type="evidence at protein level"/>
<dbReference type="EMBL" id="U31376">
    <property type="protein sequence ID" value="AAA74491.1"/>
    <property type="molecule type" value="Genomic_DNA"/>
</dbReference>
<dbReference type="EMBL" id="U00027">
    <property type="protein sequence ID" value="AAB68015.1"/>
    <property type="molecule type" value="Genomic_DNA"/>
</dbReference>
<dbReference type="EMBL" id="BK006934">
    <property type="protein sequence ID" value="DAA06863.1"/>
    <property type="molecule type" value="Genomic_DNA"/>
</dbReference>
<dbReference type="PIR" id="S48909">
    <property type="entry name" value="S48909"/>
</dbReference>
<dbReference type="RefSeq" id="NP_012040.1">
    <property type="nucleotide sequence ID" value="NM_001179301.1"/>
</dbReference>
<dbReference type="PDB" id="5H4P">
    <property type="method" value="EM"/>
    <property type="resolution" value="3.07 A"/>
    <property type="chains" value="w=155-402"/>
</dbReference>
<dbReference type="PDB" id="5T62">
    <property type="method" value="EM"/>
    <property type="resolution" value="3.30 A"/>
    <property type="chains" value="V=1-518"/>
</dbReference>
<dbReference type="PDB" id="5T6R">
    <property type="method" value="EM"/>
    <property type="resolution" value="4.50 A"/>
    <property type="chains" value="V=2-518"/>
</dbReference>
<dbReference type="PDB" id="6N8K">
    <property type="method" value="EM"/>
    <property type="resolution" value="3.60 A"/>
    <property type="chains" value="v=1-518"/>
</dbReference>
<dbReference type="PDB" id="6N8L">
    <property type="method" value="EM"/>
    <property type="resolution" value="3.60 A"/>
    <property type="chains" value="v=1-518"/>
</dbReference>
<dbReference type="PDB" id="6N8M">
    <property type="method" value="EM"/>
    <property type="resolution" value="3.50 A"/>
    <property type="chains" value="V=1-518"/>
</dbReference>
<dbReference type="PDB" id="6N8N">
    <property type="method" value="EM"/>
    <property type="resolution" value="3.80 A"/>
    <property type="chains" value="V=1-518"/>
</dbReference>
<dbReference type="PDB" id="6N8O">
    <property type="method" value="EM"/>
    <property type="resolution" value="3.50 A"/>
    <property type="chains" value="V=1-518"/>
</dbReference>
<dbReference type="PDB" id="6QIK">
    <property type="method" value="EM"/>
    <property type="resolution" value="3.10 A"/>
    <property type="chains" value="w=1-518"/>
</dbReference>
<dbReference type="PDB" id="6QTZ">
    <property type="method" value="EM"/>
    <property type="resolution" value="3.50 A"/>
    <property type="chains" value="w=1-518"/>
</dbReference>
<dbReference type="PDB" id="6RI5">
    <property type="method" value="EM"/>
    <property type="resolution" value="3.30 A"/>
    <property type="chains" value="w=1-518"/>
</dbReference>
<dbReference type="PDB" id="6RZZ">
    <property type="method" value="EM"/>
    <property type="resolution" value="3.20 A"/>
    <property type="chains" value="w=1-518"/>
</dbReference>
<dbReference type="PDB" id="6S05">
    <property type="method" value="EM"/>
    <property type="resolution" value="3.90 A"/>
    <property type="chains" value="w=1-518"/>
</dbReference>
<dbReference type="PDB" id="7Z34">
    <property type="method" value="EM"/>
    <property type="resolution" value="3.80 A"/>
    <property type="chains" value="v=1-518"/>
</dbReference>
<dbReference type="PDB" id="8HFR">
    <property type="method" value="EM"/>
    <property type="resolution" value="2.64 A"/>
    <property type="chains" value="vV=1-518"/>
</dbReference>
<dbReference type="PDBsum" id="5H4P"/>
<dbReference type="PDBsum" id="5T62"/>
<dbReference type="PDBsum" id="5T6R"/>
<dbReference type="PDBsum" id="6N8K"/>
<dbReference type="PDBsum" id="6N8L"/>
<dbReference type="PDBsum" id="6N8M"/>
<dbReference type="PDBsum" id="6N8N"/>
<dbReference type="PDBsum" id="6N8O"/>
<dbReference type="PDBsum" id="6QIK"/>
<dbReference type="PDBsum" id="6QTZ"/>
<dbReference type="PDBsum" id="6RI5"/>
<dbReference type="PDBsum" id="6RZZ"/>
<dbReference type="PDBsum" id="6S05"/>
<dbReference type="PDBsum" id="7Z34"/>
<dbReference type="PDBsum" id="8HFR"/>
<dbReference type="EMDB" id="EMD-0370"/>
<dbReference type="EMDB" id="EMD-0371"/>
<dbReference type="EMDB" id="EMD-0372"/>
<dbReference type="EMDB" id="EMD-0373"/>
<dbReference type="EMDB" id="EMD-0374"/>
<dbReference type="EMDB" id="EMD-10068"/>
<dbReference type="EMDB" id="EMD-10071"/>
<dbReference type="EMDB" id="EMD-14471"/>
<dbReference type="EMDB" id="EMD-34725"/>
<dbReference type="EMDB" id="EMD-4560"/>
<dbReference type="EMDB" id="EMD-4636"/>
<dbReference type="EMDB" id="EMD-4884"/>
<dbReference type="EMDB" id="EMD-8362"/>
<dbReference type="EMDB" id="EMD-8368"/>
<dbReference type="SMR" id="P38861"/>
<dbReference type="BioGRID" id="36604">
    <property type="interactions" value="244"/>
</dbReference>
<dbReference type="DIP" id="DIP-1827N"/>
<dbReference type="FunCoup" id="P38861">
    <property type="interactions" value="1617"/>
</dbReference>
<dbReference type="IntAct" id="P38861">
    <property type="interactions" value="89"/>
</dbReference>
<dbReference type="MINT" id="P38861"/>
<dbReference type="STRING" id="4932.YHR170W"/>
<dbReference type="iPTMnet" id="P38861"/>
<dbReference type="PaxDb" id="4932-YHR170W"/>
<dbReference type="PeptideAtlas" id="P38861"/>
<dbReference type="EnsemblFungi" id="YHR170W_mRNA">
    <property type="protein sequence ID" value="YHR170W"/>
    <property type="gene ID" value="YHR170W"/>
</dbReference>
<dbReference type="GeneID" id="856575"/>
<dbReference type="KEGG" id="sce:YHR170W"/>
<dbReference type="AGR" id="SGD:S000001213"/>
<dbReference type="SGD" id="S000001213">
    <property type="gene designation" value="NMD3"/>
</dbReference>
<dbReference type="VEuPathDB" id="FungiDB:YHR170W"/>
<dbReference type="eggNOG" id="KOG2613">
    <property type="taxonomic scope" value="Eukaryota"/>
</dbReference>
<dbReference type="GeneTree" id="ENSGT00390000005104"/>
<dbReference type="HOGENOM" id="CLU_027444_2_0_1"/>
<dbReference type="InParanoid" id="P38861"/>
<dbReference type="OMA" id="VILVRKH"/>
<dbReference type="OrthoDB" id="203821at2759"/>
<dbReference type="BioCyc" id="YEAST:G3O-31204-MONOMER"/>
<dbReference type="BioGRID-ORCS" id="856575">
    <property type="hits" value="4 hits in 10 CRISPR screens"/>
</dbReference>
<dbReference type="PRO" id="PR:P38861"/>
<dbReference type="Proteomes" id="UP000002311">
    <property type="component" value="Chromosome VIII"/>
</dbReference>
<dbReference type="RNAct" id="P38861">
    <property type="molecule type" value="protein"/>
</dbReference>
<dbReference type="GO" id="GO:0005737">
    <property type="term" value="C:cytoplasm"/>
    <property type="evidence" value="ECO:0000318"/>
    <property type="project" value="GO_Central"/>
</dbReference>
<dbReference type="GO" id="GO:0005829">
    <property type="term" value="C:cytosol"/>
    <property type="evidence" value="ECO:0000314"/>
    <property type="project" value="SGD"/>
</dbReference>
<dbReference type="GO" id="GO:0005654">
    <property type="term" value="C:nucleoplasm"/>
    <property type="evidence" value="ECO:0007669"/>
    <property type="project" value="UniProtKB-SubCell"/>
</dbReference>
<dbReference type="GO" id="GO:0005634">
    <property type="term" value="C:nucleus"/>
    <property type="evidence" value="ECO:0000318"/>
    <property type="project" value="GO_Central"/>
</dbReference>
<dbReference type="GO" id="GO:0070180">
    <property type="term" value="F:large ribosomal subunit rRNA binding"/>
    <property type="evidence" value="ECO:0000314"/>
    <property type="project" value="SGD"/>
</dbReference>
<dbReference type="GO" id="GO:0030674">
    <property type="term" value="F:protein-macromolecule adaptor activity"/>
    <property type="evidence" value="ECO:0000314"/>
    <property type="project" value="SGD"/>
</dbReference>
<dbReference type="GO" id="GO:0043023">
    <property type="term" value="F:ribosomal large subunit binding"/>
    <property type="evidence" value="ECO:0000314"/>
    <property type="project" value="SGD"/>
</dbReference>
<dbReference type="GO" id="GO:0015031">
    <property type="term" value="P:protein transport"/>
    <property type="evidence" value="ECO:0007669"/>
    <property type="project" value="UniProtKB-KW"/>
</dbReference>
<dbReference type="GO" id="GO:0000055">
    <property type="term" value="P:ribosomal large subunit export from nucleus"/>
    <property type="evidence" value="ECO:0000315"/>
    <property type="project" value="SGD"/>
</dbReference>
<dbReference type="InterPro" id="IPR039768">
    <property type="entry name" value="Nmd3"/>
</dbReference>
<dbReference type="InterPro" id="IPR007064">
    <property type="entry name" value="Nmd3_N"/>
</dbReference>
<dbReference type="InterPro" id="IPR048898">
    <property type="entry name" value="NMD3_OB"/>
</dbReference>
<dbReference type="InterPro" id="IPR048899">
    <property type="entry name" value="NMD_SH3"/>
</dbReference>
<dbReference type="PANTHER" id="PTHR12746:SF2">
    <property type="entry name" value="60S RIBOSOMAL EXPORT PROTEIN NMD3"/>
    <property type="match status" value="1"/>
</dbReference>
<dbReference type="PANTHER" id="PTHR12746">
    <property type="entry name" value="NONSENSE-MEDIATED MRNA DECAY PROTEIN 3"/>
    <property type="match status" value="1"/>
</dbReference>
<dbReference type="Pfam" id="PF04981">
    <property type="entry name" value="NMD3"/>
    <property type="match status" value="1"/>
</dbReference>
<dbReference type="Pfam" id="PF21192">
    <property type="entry name" value="NMD3_OB"/>
    <property type="match status" value="1"/>
</dbReference>
<dbReference type="Pfam" id="PF21193">
    <property type="entry name" value="NMD_SH3"/>
    <property type="match status" value="1"/>
</dbReference>
<protein>
    <recommendedName>
        <fullName>60S ribosomal export protein NMD3</fullName>
    </recommendedName>
    <alternativeName>
        <fullName>Nonsense-mediated mRNA decay protein 3</fullName>
    </alternativeName>
</protein>
<sequence>MEFTPIDPHQHQNAATLLCCNCGTPIDGSTGLVMCYDCIKLTVDITQGIPREANISFCRNCERFLQPPGQWIRAELESRELLAICLRRLKGLTKVRLVDASFIWTEPHSRRIRIKLTVQGEAMTNTIIQQTFEVEYIVIAMQCPDCARSYTTNTWRATVQIRQKVPHKRTFLFLEQLILKHNAHVDTISISEAKDGLDFFYAQKNHAVKMIDFLNAVVPIKHKKSEELISQDTHTGASTYKFSYSVEIVPICKDDLVVLPKKLAKSMGNISQFVLCSKISNTVQFMDPTTLQTADLSPSVYWRAPFNALADVTQLVEFIVLDVDSTGISRGNRVLADITVARTSDLGVNDQVYYVRSHLGGICHAGDSVMGYFIANSNYNSDLFDGLNIDYVPDVVLVKKLYQRKSKKSRHWKLKRMAKEHKDIDASLDYNSRAQKQEMERAEKDYELFLQELEEDAELRQSVNLYKNREANVPPEEHEMDEDEDEDAPQINIDELLDELDEMTLEDGVENTPVESQQ</sequence>
<keyword id="KW-0002">3D-structure</keyword>
<keyword id="KW-0963">Cytoplasm</keyword>
<keyword id="KW-0539">Nucleus</keyword>
<keyword id="KW-0653">Protein transport</keyword>
<keyword id="KW-1185">Reference proteome</keyword>
<keyword id="KW-0813">Transport</keyword>
<reference key="1">
    <citation type="submission" date="1995-07" db="EMBL/GenBank/DDBJ databases">
        <authorList>
            <person name="He F."/>
            <person name="Jacobson A."/>
        </authorList>
    </citation>
    <scope>NUCLEOTIDE SEQUENCE [GENOMIC DNA]</scope>
</reference>
<reference key="2">
    <citation type="journal article" date="1994" name="Science">
        <title>Complete nucleotide sequence of Saccharomyces cerevisiae chromosome VIII.</title>
        <authorList>
            <person name="Johnston M."/>
            <person name="Andrews S."/>
            <person name="Brinkman R."/>
            <person name="Cooper J."/>
            <person name="Ding H."/>
            <person name="Dover J."/>
            <person name="Du Z."/>
            <person name="Favello A."/>
            <person name="Fulton L."/>
            <person name="Gattung S."/>
            <person name="Geisel C."/>
            <person name="Kirsten J."/>
            <person name="Kucaba T."/>
            <person name="Hillier L.W."/>
            <person name="Jier M."/>
            <person name="Johnston L."/>
            <person name="Langston Y."/>
            <person name="Latreille P."/>
            <person name="Louis E.J."/>
            <person name="Macri C."/>
            <person name="Mardis E."/>
            <person name="Menezes S."/>
            <person name="Mouser L."/>
            <person name="Nhan M."/>
            <person name="Rifkin L."/>
            <person name="Riles L."/>
            <person name="St Peter H."/>
            <person name="Trevaskis E."/>
            <person name="Vaughan K."/>
            <person name="Vignati D."/>
            <person name="Wilcox L."/>
            <person name="Wohldman P."/>
            <person name="Waterston R."/>
            <person name="Wilson R."/>
            <person name="Vaudin M."/>
        </authorList>
    </citation>
    <scope>NUCLEOTIDE SEQUENCE [LARGE SCALE GENOMIC DNA]</scope>
    <source>
        <strain>ATCC 204508 / S288c</strain>
    </source>
</reference>
<reference key="3">
    <citation type="journal article" date="2014" name="G3 (Bethesda)">
        <title>The reference genome sequence of Saccharomyces cerevisiae: Then and now.</title>
        <authorList>
            <person name="Engel S.R."/>
            <person name="Dietrich F.S."/>
            <person name="Fisk D.G."/>
            <person name="Binkley G."/>
            <person name="Balakrishnan R."/>
            <person name="Costanzo M.C."/>
            <person name="Dwight S.S."/>
            <person name="Hitz B.C."/>
            <person name="Karra K."/>
            <person name="Nash R.S."/>
            <person name="Weng S."/>
            <person name="Wong E.D."/>
            <person name="Lloyd P."/>
            <person name="Skrzypek M.S."/>
            <person name="Miyasato S.R."/>
            <person name="Simison M."/>
            <person name="Cherry J.M."/>
        </authorList>
    </citation>
    <scope>GENOME REANNOTATION</scope>
    <source>
        <strain>ATCC 204508 / S288c</strain>
    </source>
</reference>
<reference key="4">
    <citation type="journal article" date="2003" name="Nature">
        <title>Global analysis of protein expression in yeast.</title>
        <authorList>
            <person name="Ghaemmaghami S."/>
            <person name="Huh W.-K."/>
            <person name="Bower K."/>
            <person name="Howson R.W."/>
            <person name="Belle A."/>
            <person name="Dephoure N."/>
            <person name="O'Shea E.K."/>
            <person name="Weissman J.S."/>
        </authorList>
    </citation>
    <scope>LEVEL OF PROTEIN EXPRESSION [LARGE SCALE ANALYSIS]</scope>
</reference>
<reference key="5">
    <citation type="journal article" date="2000" name="J. Cell Biol.">
        <title>Nmd3p is a Crm1p-dependent adapter protein for nuclear export of the large ribosomal subunit.</title>
        <authorList>
            <person name="Ho J.H."/>
            <person name="Kallstrom G."/>
            <person name="Johnson A.W."/>
        </authorList>
    </citation>
    <scope>FUNCTION</scope>
    <scope>ASSOCIATION WITH THE 60S RIBOSOMAL SUBUNIT</scope>
    <scope>SUBCELLULAR LOCATION</scope>
</reference>
<comment type="function">
    <text evidence="2">Acts as an adapter for the XPO1/CRM1-mediated export of the 60S ribosomal subunit. Unlikely to play a significant role in nonsense-mediated mRNA decay (NMD).</text>
</comment>
<comment type="subunit">
    <text>Associates with the 60S ribosomal subunit.</text>
</comment>
<comment type="interaction">
    <interactant intactId="EBI-12077">
        <id>P38861</id>
    </interactant>
    <interactant intactId="EBI-15308">
        <id>P04456</id>
        <label>RPL25</label>
    </interactant>
    <organismsDiffer>false</organismsDiffer>
    <experiments>2</experiments>
</comment>
<comment type="subcellular location">
    <subcellularLocation>
        <location evidence="2">Cytoplasm</location>
    </subcellularLocation>
    <subcellularLocation>
        <location evidence="2">Nucleus</location>
        <location evidence="2">Nucleoplasm</location>
    </subcellularLocation>
    <text>Shuttles between the nucleus and the cytoplasm in a XPO1/CRM1-dependent manner.</text>
</comment>
<comment type="miscellaneous">
    <text evidence="3">Present with 11900 molecules/cell in log phase SD medium.</text>
</comment>
<comment type="similarity">
    <text evidence="4">Belongs to the NMD3 family.</text>
</comment>
<accession>P38861</accession>
<accession>D3DLB9</accession>
<feature type="chain" id="PRO_0000096874" description="60S ribosomal export protein NMD3">
    <location>
        <begin position="1"/>
        <end position="518"/>
    </location>
</feature>
<feature type="region of interest" description="Disordered" evidence="1">
    <location>
        <begin position="466"/>
        <end position="491"/>
    </location>
</feature>
<feature type="short sequence motif" description="Nuclear localization signal">
    <location>
        <begin position="399"/>
        <end position="415"/>
    </location>
</feature>
<feature type="short sequence motif" description="Nuclear export signal">
    <location>
        <begin position="493"/>
        <end position="502"/>
    </location>
</feature>
<feature type="compositionally biased region" description="Acidic residues" evidence="1">
    <location>
        <begin position="478"/>
        <end position="488"/>
    </location>
</feature>
<feature type="sequence conflict" description="In Ref. 1; AAA74491." evidence="4" ref="1">
    <original>K</original>
    <variation>F</variation>
    <location>
        <position position="94"/>
    </location>
</feature>